<feature type="chain" id="PRO_1000099196" description="Mannitol-1-phosphate 5-dehydrogenase">
    <location>
        <begin position="1"/>
        <end position="382"/>
    </location>
</feature>
<feature type="binding site" evidence="1">
    <location>
        <begin position="3"/>
        <end position="14"/>
    </location>
    <ligand>
        <name>NAD(+)</name>
        <dbReference type="ChEBI" id="CHEBI:57540"/>
    </ligand>
</feature>
<accession>B5FLG3</accession>
<gene>
    <name evidence="1" type="primary">mtlD</name>
    <name type="ordered locus">SeD_A4071</name>
</gene>
<organism>
    <name type="scientific">Salmonella dublin (strain CT_02021853)</name>
    <dbReference type="NCBI Taxonomy" id="439851"/>
    <lineage>
        <taxon>Bacteria</taxon>
        <taxon>Pseudomonadati</taxon>
        <taxon>Pseudomonadota</taxon>
        <taxon>Gammaproteobacteria</taxon>
        <taxon>Enterobacterales</taxon>
        <taxon>Enterobacteriaceae</taxon>
        <taxon>Salmonella</taxon>
    </lineage>
</organism>
<evidence type="ECO:0000255" key="1">
    <source>
        <dbReference type="HAMAP-Rule" id="MF_00196"/>
    </source>
</evidence>
<reference key="1">
    <citation type="journal article" date="2011" name="J. Bacteriol.">
        <title>Comparative genomics of 28 Salmonella enterica isolates: evidence for CRISPR-mediated adaptive sublineage evolution.</title>
        <authorList>
            <person name="Fricke W.F."/>
            <person name="Mammel M.K."/>
            <person name="McDermott P.F."/>
            <person name="Tartera C."/>
            <person name="White D.G."/>
            <person name="Leclerc J.E."/>
            <person name="Ravel J."/>
            <person name="Cebula T.A."/>
        </authorList>
    </citation>
    <scope>NUCLEOTIDE SEQUENCE [LARGE SCALE GENOMIC DNA]</scope>
    <source>
        <strain>CT_02021853</strain>
    </source>
</reference>
<name>MTLD_SALDC</name>
<proteinExistence type="inferred from homology"/>
<dbReference type="EC" id="1.1.1.17" evidence="1"/>
<dbReference type="EMBL" id="CP001144">
    <property type="protein sequence ID" value="ACH75386.1"/>
    <property type="molecule type" value="Genomic_DNA"/>
</dbReference>
<dbReference type="RefSeq" id="WP_000645383.1">
    <property type="nucleotide sequence ID" value="NC_011205.1"/>
</dbReference>
<dbReference type="SMR" id="B5FLG3"/>
<dbReference type="KEGG" id="sed:SeD_A4071"/>
<dbReference type="HOGENOM" id="CLU_036089_2_0_6"/>
<dbReference type="Proteomes" id="UP000008322">
    <property type="component" value="Chromosome"/>
</dbReference>
<dbReference type="GO" id="GO:0005829">
    <property type="term" value="C:cytosol"/>
    <property type="evidence" value="ECO:0007669"/>
    <property type="project" value="TreeGrafter"/>
</dbReference>
<dbReference type="GO" id="GO:0008926">
    <property type="term" value="F:mannitol-1-phosphate 5-dehydrogenase activity"/>
    <property type="evidence" value="ECO:0007669"/>
    <property type="project" value="UniProtKB-UniRule"/>
</dbReference>
<dbReference type="GO" id="GO:0019592">
    <property type="term" value="P:mannitol catabolic process"/>
    <property type="evidence" value="ECO:0007669"/>
    <property type="project" value="TreeGrafter"/>
</dbReference>
<dbReference type="FunFam" id="1.10.1040.10:FF:000009">
    <property type="entry name" value="Mannitol-1-phosphate 5-dehydrogenase"/>
    <property type="match status" value="1"/>
</dbReference>
<dbReference type="FunFam" id="3.40.50.720:FF:000075">
    <property type="entry name" value="Mannitol-1-phosphate 5-dehydrogenase"/>
    <property type="match status" value="1"/>
</dbReference>
<dbReference type="Gene3D" id="1.10.1040.10">
    <property type="entry name" value="N-(1-d-carboxylethyl)-l-norvaline Dehydrogenase, domain 2"/>
    <property type="match status" value="1"/>
</dbReference>
<dbReference type="Gene3D" id="3.40.50.720">
    <property type="entry name" value="NAD(P)-binding Rossmann-like Domain"/>
    <property type="match status" value="1"/>
</dbReference>
<dbReference type="HAMAP" id="MF_00196">
    <property type="entry name" value="Mannitol_dehydrog"/>
    <property type="match status" value="1"/>
</dbReference>
<dbReference type="InterPro" id="IPR008927">
    <property type="entry name" value="6-PGluconate_DH-like_C_sf"/>
</dbReference>
<dbReference type="InterPro" id="IPR013328">
    <property type="entry name" value="6PGD_dom2"/>
</dbReference>
<dbReference type="InterPro" id="IPR023028">
    <property type="entry name" value="Mannitol_1_phos_5_DH"/>
</dbReference>
<dbReference type="InterPro" id="IPR000669">
    <property type="entry name" value="Mannitol_DH"/>
</dbReference>
<dbReference type="InterPro" id="IPR013118">
    <property type="entry name" value="Mannitol_DH_C"/>
</dbReference>
<dbReference type="InterPro" id="IPR023027">
    <property type="entry name" value="Mannitol_DH_CS"/>
</dbReference>
<dbReference type="InterPro" id="IPR013131">
    <property type="entry name" value="Mannitol_DH_N"/>
</dbReference>
<dbReference type="InterPro" id="IPR036291">
    <property type="entry name" value="NAD(P)-bd_dom_sf"/>
</dbReference>
<dbReference type="NCBIfam" id="NF002646">
    <property type="entry name" value="PRK02318.1-2"/>
    <property type="match status" value="1"/>
</dbReference>
<dbReference type="NCBIfam" id="NF002647">
    <property type="entry name" value="PRK02318.1-3"/>
    <property type="match status" value="1"/>
</dbReference>
<dbReference type="NCBIfam" id="NF002648">
    <property type="entry name" value="PRK02318.1-4"/>
    <property type="match status" value="1"/>
</dbReference>
<dbReference type="NCBIfam" id="NF002650">
    <property type="entry name" value="PRK02318.2-2"/>
    <property type="match status" value="1"/>
</dbReference>
<dbReference type="NCBIfam" id="NF002652">
    <property type="entry name" value="PRK02318.2-5"/>
    <property type="match status" value="1"/>
</dbReference>
<dbReference type="PANTHER" id="PTHR30524:SF0">
    <property type="entry name" value="ALTRONATE OXIDOREDUCTASE-RELATED"/>
    <property type="match status" value="1"/>
</dbReference>
<dbReference type="PANTHER" id="PTHR30524">
    <property type="entry name" value="MANNITOL-1-PHOSPHATE 5-DEHYDROGENASE"/>
    <property type="match status" value="1"/>
</dbReference>
<dbReference type="Pfam" id="PF01232">
    <property type="entry name" value="Mannitol_dh"/>
    <property type="match status" value="1"/>
</dbReference>
<dbReference type="Pfam" id="PF08125">
    <property type="entry name" value="Mannitol_dh_C"/>
    <property type="match status" value="1"/>
</dbReference>
<dbReference type="PRINTS" id="PR00084">
    <property type="entry name" value="MTLDHDRGNASE"/>
</dbReference>
<dbReference type="SUPFAM" id="SSF48179">
    <property type="entry name" value="6-phosphogluconate dehydrogenase C-terminal domain-like"/>
    <property type="match status" value="1"/>
</dbReference>
<dbReference type="SUPFAM" id="SSF51735">
    <property type="entry name" value="NAD(P)-binding Rossmann-fold domains"/>
    <property type="match status" value="1"/>
</dbReference>
<dbReference type="PROSITE" id="PS00974">
    <property type="entry name" value="MANNITOL_DHGENASE"/>
    <property type="match status" value="1"/>
</dbReference>
<comment type="catalytic activity">
    <reaction evidence="1">
        <text>D-mannitol 1-phosphate + NAD(+) = beta-D-fructose 6-phosphate + NADH + H(+)</text>
        <dbReference type="Rhea" id="RHEA:19661"/>
        <dbReference type="ChEBI" id="CHEBI:15378"/>
        <dbReference type="ChEBI" id="CHEBI:57540"/>
        <dbReference type="ChEBI" id="CHEBI:57634"/>
        <dbReference type="ChEBI" id="CHEBI:57945"/>
        <dbReference type="ChEBI" id="CHEBI:61381"/>
        <dbReference type="EC" id="1.1.1.17"/>
    </reaction>
</comment>
<comment type="similarity">
    <text evidence="1">Belongs to the mannitol dehydrogenase family.</text>
</comment>
<keyword id="KW-0520">NAD</keyword>
<keyword id="KW-0560">Oxidoreductase</keyword>
<sequence>MKALHFGAGNIGRGFIGKLLADAGIQLTFADVNQVVLDALNARHSYQVHVVGENEQVDTVSGVNAVSSIGDDVVDLIAHVDLITTAVGPVVLERIAPAIAKGLVKRKAQGVDAPLNIIACENMVRGTTQLKGHVMNALADGDKAWVEQHVGFVDSAVDRIVPPSASATHDPLEVTVETFSEWIVDKTQFKGALPTIPGMELTDNLMAFVERKLFTLNTGHAITAYLGKLAGHQTIRDAILDESIRAVVKGAMEESGAVLIKRYGFDADKHAAYIQKILGRFENPYLKDDVERVGRQPLRKLSAGDRLIKPLLGTLEYGLPHVNLVKGIAAAMHFRSDEDPQAQELAALITEKGPQAALAQISGLDANSDVVAEAVNAYNATK</sequence>
<protein>
    <recommendedName>
        <fullName evidence="1">Mannitol-1-phosphate 5-dehydrogenase</fullName>
        <ecNumber evidence="1">1.1.1.17</ecNumber>
    </recommendedName>
</protein>